<gene>
    <name type="ordered locus">MJ0867</name>
</gene>
<accession>Q58277</accession>
<feature type="chain" id="PRO_0000141760" description="Probable threonylcarbamoyladenosine tRNA methylthiotransferase">
    <location>
        <begin position="1"/>
        <end position="427"/>
    </location>
</feature>
<feature type="domain" description="MTTase N-terminal" evidence="3">
    <location>
        <begin position="12"/>
        <end position="118"/>
    </location>
</feature>
<feature type="domain" description="Radical SAM core" evidence="4">
    <location>
        <begin position="141"/>
        <end position="370"/>
    </location>
</feature>
<feature type="domain" description="TRAM" evidence="2">
    <location>
        <begin position="373"/>
        <end position="427"/>
    </location>
</feature>
<feature type="binding site" evidence="3">
    <location>
        <position position="21"/>
    </location>
    <ligand>
        <name>[4Fe-4S] cluster</name>
        <dbReference type="ChEBI" id="CHEBI:49883"/>
        <label>1</label>
    </ligand>
</feature>
<feature type="binding site" evidence="3">
    <location>
        <position position="57"/>
    </location>
    <ligand>
        <name>[4Fe-4S] cluster</name>
        <dbReference type="ChEBI" id="CHEBI:49883"/>
        <label>1</label>
    </ligand>
</feature>
<feature type="binding site" evidence="3">
    <location>
        <position position="86"/>
    </location>
    <ligand>
        <name>[4Fe-4S] cluster</name>
        <dbReference type="ChEBI" id="CHEBI:49883"/>
        <label>1</label>
    </ligand>
</feature>
<feature type="binding site" evidence="3">
    <location>
        <position position="155"/>
    </location>
    <ligand>
        <name>[4Fe-4S] cluster</name>
        <dbReference type="ChEBI" id="CHEBI:49883"/>
        <label>2</label>
        <note>4Fe-4S-S-AdoMet</note>
    </ligand>
</feature>
<feature type="binding site" evidence="3">
    <location>
        <position position="159"/>
    </location>
    <ligand>
        <name>[4Fe-4S] cluster</name>
        <dbReference type="ChEBI" id="CHEBI:49883"/>
        <label>2</label>
        <note>4Fe-4S-S-AdoMet</note>
    </ligand>
</feature>
<feature type="binding site" evidence="3">
    <location>
        <position position="162"/>
    </location>
    <ligand>
        <name>[4Fe-4S] cluster</name>
        <dbReference type="ChEBI" id="CHEBI:49883"/>
        <label>2</label>
        <note>4Fe-4S-S-AdoMet</note>
    </ligand>
</feature>
<dbReference type="EC" id="2.8.4.5"/>
<dbReference type="EMBL" id="L77117">
    <property type="protein sequence ID" value="AAB98872.1"/>
    <property type="molecule type" value="Genomic_DNA"/>
</dbReference>
<dbReference type="PIR" id="C64408">
    <property type="entry name" value="C64408"/>
</dbReference>
<dbReference type="SMR" id="Q58277"/>
<dbReference type="FunCoup" id="Q58277">
    <property type="interactions" value="263"/>
</dbReference>
<dbReference type="STRING" id="243232.MJ_0867"/>
<dbReference type="PaxDb" id="243232-MJ_0867"/>
<dbReference type="EnsemblBacteria" id="AAB98872">
    <property type="protein sequence ID" value="AAB98872"/>
    <property type="gene ID" value="MJ_0867"/>
</dbReference>
<dbReference type="KEGG" id="mja:MJ_0867"/>
<dbReference type="eggNOG" id="arCOG01358">
    <property type="taxonomic scope" value="Archaea"/>
</dbReference>
<dbReference type="HOGENOM" id="CLU_018697_4_2_2"/>
<dbReference type="InParanoid" id="Q58277"/>
<dbReference type="PhylomeDB" id="Q58277"/>
<dbReference type="Proteomes" id="UP000000805">
    <property type="component" value="Chromosome"/>
</dbReference>
<dbReference type="GO" id="GO:0051539">
    <property type="term" value="F:4 iron, 4 sulfur cluster binding"/>
    <property type="evidence" value="ECO:0007669"/>
    <property type="project" value="UniProtKB-KW"/>
</dbReference>
<dbReference type="GO" id="GO:0046872">
    <property type="term" value="F:metal ion binding"/>
    <property type="evidence" value="ECO:0007669"/>
    <property type="project" value="UniProtKB-KW"/>
</dbReference>
<dbReference type="GO" id="GO:0035598">
    <property type="term" value="F:N6-threonylcarbomyladenosine methylthiotransferase activity"/>
    <property type="evidence" value="ECO:0000318"/>
    <property type="project" value="GO_Central"/>
</dbReference>
<dbReference type="GO" id="GO:0061712">
    <property type="term" value="F:tRNA (N(6)-L-threonylcarbamoyladenosine(37)-C(2))-methylthiotransferase"/>
    <property type="evidence" value="ECO:0007669"/>
    <property type="project" value="UniProtKB-EC"/>
</dbReference>
<dbReference type="GO" id="GO:0035600">
    <property type="term" value="P:tRNA methylthiolation"/>
    <property type="evidence" value="ECO:0000318"/>
    <property type="project" value="GO_Central"/>
</dbReference>
<dbReference type="FunFam" id="3.40.50.12160:FF:000003">
    <property type="entry name" value="CDK5 regulatory subunit-associated protein 1"/>
    <property type="match status" value="1"/>
</dbReference>
<dbReference type="FunFam" id="3.80.30.20:FF:000002">
    <property type="entry name" value="threonylcarbamoyladenosine tRNA methylthiotransferase isoform X2"/>
    <property type="match status" value="1"/>
</dbReference>
<dbReference type="Gene3D" id="3.40.50.12160">
    <property type="entry name" value="Methylthiotransferase, N-terminal domain"/>
    <property type="match status" value="1"/>
</dbReference>
<dbReference type="Gene3D" id="3.80.30.20">
    <property type="entry name" value="tm_1862 like domain"/>
    <property type="match status" value="1"/>
</dbReference>
<dbReference type="InterPro" id="IPR006638">
    <property type="entry name" value="Elp3/MiaA/NifB-like_rSAM"/>
</dbReference>
<dbReference type="InterPro" id="IPR005839">
    <property type="entry name" value="Methylthiotransferase"/>
</dbReference>
<dbReference type="InterPro" id="IPR020612">
    <property type="entry name" value="Methylthiotransferase_CS"/>
</dbReference>
<dbReference type="InterPro" id="IPR013848">
    <property type="entry name" value="Methylthiotransferase_N"/>
</dbReference>
<dbReference type="InterPro" id="IPR038135">
    <property type="entry name" value="Methylthiotransferase_N_sf"/>
</dbReference>
<dbReference type="InterPro" id="IPR006466">
    <property type="entry name" value="MiaB-like_arc_euk"/>
</dbReference>
<dbReference type="InterPro" id="IPR007197">
    <property type="entry name" value="rSAM"/>
</dbReference>
<dbReference type="InterPro" id="IPR023404">
    <property type="entry name" value="rSAM_horseshoe"/>
</dbReference>
<dbReference type="InterPro" id="IPR002792">
    <property type="entry name" value="TRAM_dom"/>
</dbReference>
<dbReference type="NCBIfam" id="TIGR01578">
    <property type="entry name" value="MiaB-like-B"/>
    <property type="match status" value="1"/>
</dbReference>
<dbReference type="NCBIfam" id="TIGR00089">
    <property type="entry name" value="MiaB/RimO family radical SAM methylthiotransferase"/>
    <property type="match status" value="1"/>
</dbReference>
<dbReference type="PANTHER" id="PTHR11918">
    <property type="entry name" value="RADICAL SAM PROTEINS"/>
    <property type="match status" value="1"/>
</dbReference>
<dbReference type="PANTHER" id="PTHR11918:SF45">
    <property type="entry name" value="THREONYLCARBAMOYLADENOSINE TRNA METHYLTHIOTRANSFERASE"/>
    <property type="match status" value="1"/>
</dbReference>
<dbReference type="Pfam" id="PF04055">
    <property type="entry name" value="Radical_SAM"/>
    <property type="match status" value="1"/>
</dbReference>
<dbReference type="Pfam" id="PF01938">
    <property type="entry name" value="TRAM"/>
    <property type="match status" value="1"/>
</dbReference>
<dbReference type="Pfam" id="PF00919">
    <property type="entry name" value="UPF0004"/>
    <property type="match status" value="1"/>
</dbReference>
<dbReference type="SFLD" id="SFLDG01082">
    <property type="entry name" value="B12-binding_domain_containing"/>
    <property type="match status" value="1"/>
</dbReference>
<dbReference type="SFLD" id="SFLDG01061">
    <property type="entry name" value="methylthiotransferase"/>
    <property type="match status" value="1"/>
</dbReference>
<dbReference type="SFLD" id="SFLDS00029">
    <property type="entry name" value="Radical_SAM"/>
    <property type="match status" value="1"/>
</dbReference>
<dbReference type="SMART" id="SM00729">
    <property type="entry name" value="Elp3"/>
    <property type="match status" value="1"/>
</dbReference>
<dbReference type="SUPFAM" id="SSF102114">
    <property type="entry name" value="Radical SAM enzymes"/>
    <property type="match status" value="1"/>
</dbReference>
<dbReference type="PROSITE" id="PS51449">
    <property type="entry name" value="MTTASE_N"/>
    <property type="match status" value="1"/>
</dbReference>
<dbReference type="PROSITE" id="PS01278">
    <property type="entry name" value="MTTASE_RADICAL"/>
    <property type="match status" value="1"/>
</dbReference>
<dbReference type="PROSITE" id="PS51918">
    <property type="entry name" value="RADICAL_SAM"/>
    <property type="match status" value="1"/>
</dbReference>
<dbReference type="PROSITE" id="PS50926">
    <property type="entry name" value="TRAM"/>
    <property type="match status" value="1"/>
</dbReference>
<protein>
    <recommendedName>
        <fullName>Probable threonylcarbamoyladenosine tRNA methylthiotransferase</fullName>
        <ecNumber>2.8.4.5</ecNumber>
    </recommendedName>
    <alternativeName>
        <fullName>tRNA-t(6)A37 methylthiotransferase</fullName>
    </alternativeName>
</protein>
<sequence length="427" mass="49090">MWLYYLQVVMDMRVYVEGYGCVLNTADTEIIKNSLKKHGFEVVNNLEEADIAIINTCVVRLETENRMIYRINELKNLGKEVVVAGCLPKALKNKVKGFLHIYPREAHKAGEILKNYVEKHYRMPYIEEDINKTLYKKLDYLKPSLITPLPICEGCIGNCSYCIVKIARGGLISYPREKIVNKAKELINKGAKCLLITAQDTACYGFDIGDNLANLLNELTQIKGEFIMRVGMMHAKNAELILDELIEVYQNEKVGKFLHLPLQSGDDEILKRMKRGYTVDEFKDIVNEFRRKIKNLCFTTDIIVGFPGETEEQFQNTLEVLRELKPDYIHGAKYSQRKGTEAAKMKQIDTKIRKRRSEILDKLRRELSYLNNKKYIGKAMKVLVLDEGKGYTDNFKVVKFEGGEVGEFRKVKITDAKTFGLKGELIL</sequence>
<reference key="1">
    <citation type="journal article" date="1996" name="Science">
        <title>Complete genome sequence of the methanogenic archaeon, Methanococcus jannaschii.</title>
        <authorList>
            <person name="Bult C.J."/>
            <person name="White O."/>
            <person name="Olsen G.J."/>
            <person name="Zhou L."/>
            <person name="Fleischmann R.D."/>
            <person name="Sutton G.G."/>
            <person name="Blake J.A."/>
            <person name="FitzGerald L.M."/>
            <person name="Clayton R.A."/>
            <person name="Gocayne J.D."/>
            <person name="Kerlavage A.R."/>
            <person name="Dougherty B.A."/>
            <person name="Tomb J.-F."/>
            <person name="Adams M.D."/>
            <person name="Reich C.I."/>
            <person name="Overbeek R."/>
            <person name="Kirkness E.F."/>
            <person name="Weinstock K.G."/>
            <person name="Merrick J.M."/>
            <person name="Glodek A."/>
            <person name="Scott J.L."/>
            <person name="Geoghagen N.S.M."/>
            <person name="Weidman J.F."/>
            <person name="Fuhrmann J.L."/>
            <person name="Nguyen D."/>
            <person name="Utterback T.R."/>
            <person name="Kelley J.M."/>
            <person name="Peterson J.D."/>
            <person name="Sadow P.W."/>
            <person name="Hanna M.C."/>
            <person name="Cotton M.D."/>
            <person name="Roberts K.M."/>
            <person name="Hurst M.A."/>
            <person name="Kaine B.P."/>
            <person name="Borodovsky M."/>
            <person name="Klenk H.-P."/>
            <person name="Fraser C.M."/>
            <person name="Smith H.O."/>
            <person name="Woese C.R."/>
            <person name="Venter J.C."/>
        </authorList>
    </citation>
    <scope>NUCLEOTIDE SEQUENCE [LARGE SCALE GENOMIC DNA]</scope>
    <source>
        <strain>ATCC 43067 / DSM 2661 / JAL-1 / JCM 10045 / NBRC 100440</strain>
    </source>
</reference>
<organism>
    <name type="scientific">Methanocaldococcus jannaschii (strain ATCC 43067 / DSM 2661 / JAL-1 / JCM 10045 / NBRC 100440)</name>
    <name type="common">Methanococcus jannaschii</name>
    <dbReference type="NCBI Taxonomy" id="243232"/>
    <lineage>
        <taxon>Archaea</taxon>
        <taxon>Methanobacteriati</taxon>
        <taxon>Methanobacteriota</taxon>
        <taxon>Methanomada group</taxon>
        <taxon>Methanococci</taxon>
        <taxon>Methanococcales</taxon>
        <taxon>Methanocaldococcaceae</taxon>
        <taxon>Methanocaldococcus</taxon>
    </lineage>
</organism>
<proteinExistence type="inferred from homology"/>
<name>AMTAB_METJA</name>
<comment type="function">
    <text evidence="1">Catalyzes the methylthiolation of N6-threonylcarbamoyladenosine (t(6)A), leading to the formation of 2-methylthio-N6-threonylcarbamoyladenosine (ms(2)t(6)A) at position 37 in tRNAs that read codons beginning with adenine.</text>
</comment>
<comment type="catalytic activity">
    <reaction evidence="1">
        <text>N(6)-L-threonylcarbamoyladenosine(37) in tRNA + (sulfur carrier)-SH + AH2 + 2 S-adenosyl-L-methionine = 2-methylsulfanyl-N(6)-L-threonylcarbamoyladenosine(37) in tRNA + (sulfur carrier)-H + 5'-deoxyadenosine + L-methionine + A + S-adenosyl-L-homocysteine + 2 H(+)</text>
        <dbReference type="Rhea" id="RHEA:37075"/>
        <dbReference type="Rhea" id="RHEA-COMP:10163"/>
        <dbReference type="Rhea" id="RHEA-COMP:11092"/>
        <dbReference type="Rhea" id="RHEA-COMP:14737"/>
        <dbReference type="Rhea" id="RHEA-COMP:14739"/>
        <dbReference type="ChEBI" id="CHEBI:13193"/>
        <dbReference type="ChEBI" id="CHEBI:15378"/>
        <dbReference type="ChEBI" id="CHEBI:17319"/>
        <dbReference type="ChEBI" id="CHEBI:17499"/>
        <dbReference type="ChEBI" id="CHEBI:29917"/>
        <dbReference type="ChEBI" id="CHEBI:57844"/>
        <dbReference type="ChEBI" id="CHEBI:57856"/>
        <dbReference type="ChEBI" id="CHEBI:59789"/>
        <dbReference type="ChEBI" id="CHEBI:64428"/>
        <dbReference type="ChEBI" id="CHEBI:74418"/>
        <dbReference type="ChEBI" id="CHEBI:74420"/>
        <dbReference type="EC" id="2.8.4.5"/>
    </reaction>
</comment>
<comment type="cofactor">
    <cofactor evidence="3">
        <name>[4Fe-4S] cluster</name>
        <dbReference type="ChEBI" id="CHEBI:49883"/>
    </cofactor>
    <text evidence="3">Binds 2 [4Fe-4S] clusters. One cluster is coordinated with 3 cysteines and an exchangeable S-adenosyl-L-methionine.</text>
</comment>
<comment type="similarity">
    <text evidence="5">Belongs to the methylthiotransferase family. CDKAL1 subfamily.</text>
</comment>
<evidence type="ECO:0000250" key="1">
    <source>
        <dbReference type="UniProtKB" id="Q5VV42"/>
    </source>
</evidence>
<evidence type="ECO:0000255" key="2">
    <source>
        <dbReference type="PROSITE-ProRule" id="PRU00208"/>
    </source>
</evidence>
<evidence type="ECO:0000255" key="3">
    <source>
        <dbReference type="PROSITE-ProRule" id="PRU00780"/>
    </source>
</evidence>
<evidence type="ECO:0000255" key="4">
    <source>
        <dbReference type="PROSITE-ProRule" id="PRU01266"/>
    </source>
</evidence>
<evidence type="ECO:0000305" key="5"/>
<keyword id="KW-0004">4Fe-4S</keyword>
<keyword id="KW-0408">Iron</keyword>
<keyword id="KW-0411">Iron-sulfur</keyword>
<keyword id="KW-0479">Metal-binding</keyword>
<keyword id="KW-1185">Reference proteome</keyword>
<keyword id="KW-0949">S-adenosyl-L-methionine</keyword>
<keyword id="KW-0808">Transferase</keyword>
<keyword id="KW-0819">tRNA processing</keyword>